<feature type="chain" id="PRO_0000339775" description="Xanthine phosphoribosyltransferase">
    <location>
        <begin position="1"/>
        <end position="193"/>
    </location>
</feature>
<feature type="binding site" evidence="1">
    <location>
        <position position="20"/>
    </location>
    <ligand>
        <name>xanthine</name>
        <dbReference type="ChEBI" id="CHEBI:17712"/>
    </ligand>
</feature>
<feature type="binding site" evidence="1">
    <location>
        <position position="27"/>
    </location>
    <ligand>
        <name>xanthine</name>
        <dbReference type="ChEBI" id="CHEBI:17712"/>
    </ligand>
</feature>
<feature type="binding site" evidence="1">
    <location>
        <begin position="128"/>
        <end position="132"/>
    </location>
    <ligand>
        <name>5-phospho-alpha-D-ribose 1-diphosphate</name>
        <dbReference type="ChEBI" id="CHEBI:58017"/>
    </ligand>
</feature>
<feature type="binding site" evidence="1">
    <location>
        <position position="156"/>
    </location>
    <ligand>
        <name>xanthine</name>
        <dbReference type="ChEBI" id="CHEBI:17712"/>
    </ligand>
</feature>
<proteinExistence type="inferred from homology"/>
<keyword id="KW-0963">Cytoplasm</keyword>
<keyword id="KW-0328">Glycosyltransferase</keyword>
<keyword id="KW-0660">Purine salvage</keyword>
<keyword id="KW-0808">Transferase</keyword>
<protein>
    <recommendedName>
        <fullName evidence="1">Xanthine phosphoribosyltransferase</fullName>
        <shortName evidence="1">XPRTase</shortName>
        <ecNumber evidence="1">2.4.2.22</ecNumber>
    </recommendedName>
</protein>
<sequence length="193" mass="20994">MQLLEERILTDGNILGENILKVDNFLTHQVDYRLMKAIGKVFAQKYAEAGITKVVTIEASGIAPAVYAAEAMDVPMIFAKKHKNITMTEGILTAEVYSFTKQVTSTVSIAGKFLSKEDKVLIIDDFLANGQAAKGLIEIIGQAGAQVVGVGIVIEKSFQDGRRLIEDMGIEVTSLARIKNFENGNLNFLEADA</sequence>
<dbReference type="EC" id="2.4.2.22" evidence="1"/>
<dbReference type="EMBL" id="CP000003">
    <property type="protein sequence ID" value="AAT86989.1"/>
    <property type="molecule type" value="Genomic_DNA"/>
</dbReference>
<dbReference type="RefSeq" id="WP_002984677.1">
    <property type="nucleotide sequence ID" value="NC_006086.1"/>
</dbReference>
<dbReference type="SMR" id="Q5XC74"/>
<dbReference type="KEGG" id="spa:M6_Spy0854"/>
<dbReference type="HOGENOM" id="CLU_099015_0_0_9"/>
<dbReference type="UniPathway" id="UPA00602">
    <property type="reaction ID" value="UER00658"/>
</dbReference>
<dbReference type="Proteomes" id="UP000001167">
    <property type="component" value="Chromosome"/>
</dbReference>
<dbReference type="GO" id="GO:0005737">
    <property type="term" value="C:cytoplasm"/>
    <property type="evidence" value="ECO:0007669"/>
    <property type="project" value="UniProtKB-SubCell"/>
</dbReference>
<dbReference type="GO" id="GO:0000310">
    <property type="term" value="F:xanthine phosphoribosyltransferase activity"/>
    <property type="evidence" value="ECO:0007669"/>
    <property type="project" value="UniProtKB-UniRule"/>
</dbReference>
<dbReference type="GO" id="GO:0006166">
    <property type="term" value="P:purine ribonucleoside salvage"/>
    <property type="evidence" value="ECO:0007669"/>
    <property type="project" value="UniProtKB-KW"/>
</dbReference>
<dbReference type="GO" id="GO:0046110">
    <property type="term" value="P:xanthine metabolic process"/>
    <property type="evidence" value="ECO:0007669"/>
    <property type="project" value="InterPro"/>
</dbReference>
<dbReference type="GO" id="GO:0032265">
    <property type="term" value="P:XMP salvage"/>
    <property type="evidence" value="ECO:0007669"/>
    <property type="project" value="UniProtKB-UniRule"/>
</dbReference>
<dbReference type="CDD" id="cd06223">
    <property type="entry name" value="PRTases_typeI"/>
    <property type="match status" value="1"/>
</dbReference>
<dbReference type="Gene3D" id="3.40.50.2020">
    <property type="match status" value="1"/>
</dbReference>
<dbReference type="HAMAP" id="MF_01184">
    <property type="entry name" value="XPRTase"/>
    <property type="match status" value="1"/>
</dbReference>
<dbReference type="InterPro" id="IPR000836">
    <property type="entry name" value="PRibTrfase_dom"/>
</dbReference>
<dbReference type="InterPro" id="IPR029057">
    <property type="entry name" value="PRTase-like"/>
</dbReference>
<dbReference type="InterPro" id="IPR050118">
    <property type="entry name" value="Pur/Pyrimidine_PRTase"/>
</dbReference>
<dbReference type="InterPro" id="IPR010079">
    <property type="entry name" value="Xanthine_PRibTrfase"/>
</dbReference>
<dbReference type="NCBIfam" id="NF006671">
    <property type="entry name" value="PRK09219.1"/>
    <property type="match status" value="1"/>
</dbReference>
<dbReference type="NCBIfam" id="TIGR01744">
    <property type="entry name" value="XPRTase"/>
    <property type="match status" value="1"/>
</dbReference>
<dbReference type="PANTHER" id="PTHR43864">
    <property type="entry name" value="HYPOXANTHINE/GUANINE PHOSPHORIBOSYLTRANSFERASE"/>
    <property type="match status" value="1"/>
</dbReference>
<dbReference type="PANTHER" id="PTHR43864:SF1">
    <property type="entry name" value="XANTHINE PHOSPHORIBOSYLTRANSFERASE"/>
    <property type="match status" value="1"/>
</dbReference>
<dbReference type="Pfam" id="PF00156">
    <property type="entry name" value="Pribosyltran"/>
    <property type="match status" value="1"/>
</dbReference>
<dbReference type="SUPFAM" id="SSF53271">
    <property type="entry name" value="PRTase-like"/>
    <property type="match status" value="1"/>
</dbReference>
<reference key="1">
    <citation type="journal article" date="2004" name="J. Infect. Dis.">
        <title>Progress toward characterization of the group A Streptococcus metagenome: complete genome sequence of a macrolide-resistant serotype M6 strain.</title>
        <authorList>
            <person name="Banks D.J."/>
            <person name="Porcella S.F."/>
            <person name="Barbian K.D."/>
            <person name="Beres S.B."/>
            <person name="Philips L.E."/>
            <person name="Voyich J.M."/>
            <person name="DeLeo F.R."/>
            <person name="Martin J.M."/>
            <person name="Somerville G.A."/>
            <person name="Musser J.M."/>
        </authorList>
    </citation>
    <scope>NUCLEOTIDE SEQUENCE [LARGE SCALE GENOMIC DNA]</scope>
    <source>
        <strain>ATCC BAA-946 / MGAS10394</strain>
    </source>
</reference>
<comment type="function">
    <text evidence="1">Converts the preformed base xanthine, a product of nucleic acid breakdown, to xanthosine 5'-monophosphate (XMP), so it can be reused for RNA or DNA synthesis.</text>
</comment>
<comment type="catalytic activity">
    <reaction evidence="1">
        <text>XMP + diphosphate = xanthine + 5-phospho-alpha-D-ribose 1-diphosphate</text>
        <dbReference type="Rhea" id="RHEA:10800"/>
        <dbReference type="ChEBI" id="CHEBI:17712"/>
        <dbReference type="ChEBI" id="CHEBI:33019"/>
        <dbReference type="ChEBI" id="CHEBI:57464"/>
        <dbReference type="ChEBI" id="CHEBI:58017"/>
        <dbReference type="EC" id="2.4.2.22"/>
    </reaction>
</comment>
<comment type="pathway">
    <text evidence="1">Purine metabolism; XMP biosynthesis via salvage pathway; XMP from xanthine: step 1/1.</text>
</comment>
<comment type="subunit">
    <text evidence="1">Homodimer.</text>
</comment>
<comment type="subcellular location">
    <subcellularLocation>
        <location evidence="1">Cytoplasm</location>
    </subcellularLocation>
</comment>
<comment type="similarity">
    <text evidence="1">Belongs to the purine/pyrimidine phosphoribosyltransferase family. Xpt subfamily.</text>
</comment>
<accession>Q5XC74</accession>
<organism>
    <name type="scientific">Streptococcus pyogenes serotype M6 (strain ATCC BAA-946 / MGAS10394)</name>
    <dbReference type="NCBI Taxonomy" id="286636"/>
    <lineage>
        <taxon>Bacteria</taxon>
        <taxon>Bacillati</taxon>
        <taxon>Bacillota</taxon>
        <taxon>Bacilli</taxon>
        <taxon>Lactobacillales</taxon>
        <taxon>Streptococcaceae</taxon>
        <taxon>Streptococcus</taxon>
    </lineage>
</organism>
<name>XPT_STRP6</name>
<gene>
    <name evidence="1" type="primary">xpt</name>
    <name type="ordered locus">M6_Spy0854</name>
</gene>
<evidence type="ECO:0000255" key="1">
    <source>
        <dbReference type="HAMAP-Rule" id="MF_01184"/>
    </source>
</evidence>